<organism>
    <name type="scientific">Tropheryma whipplei (strain TW08/27)</name>
    <name type="common">Whipple's bacillus</name>
    <dbReference type="NCBI Taxonomy" id="218496"/>
    <lineage>
        <taxon>Bacteria</taxon>
        <taxon>Bacillati</taxon>
        <taxon>Actinomycetota</taxon>
        <taxon>Actinomycetes</taxon>
        <taxon>Micrococcales</taxon>
        <taxon>Tropherymataceae</taxon>
        <taxon>Tropheryma</taxon>
    </lineage>
</organism>
<proteinExistence type="inferred from homology"/>
<gene>
    <name evidence="1" type="primary">tpiA</name>
    <name type="ordered locus">TW470</name>
</gene>
<accession>Q83HP9</accession>
<sequence>MLPKRAYPVQDSNVHSQEKKIIAGNWKMNINHSQAVSYLQELNWRLIDNGHDFDACEIAVFPPFTDLRSVQTLVASDDIQISYGAQDVSAFSDGAHTGQISAQFLKDLDCKYVLIGHSEQRCLPCYPGNNSAINELNNKHDGLIANKLLRSFAAGICPILCIGDISPGDHFDATLSRFRSVLSHLKAISDKKHSIGYALGSKTHFLDSDQLHMLVAYEPSSAINSGNCANSGDIVRMAAAIKDIVNVRVLYGGGVNLFNASAVFNEDLLDGILVGRASLNASDFASLIKTCCL</sequence>
<dbReference type="EC" id="5.3.1.1" evidence="1"/>
<dbReference type="EMBL" id="BX251411">
    <property type="protein sequence ID" value="CAD67137.1"/>
    <property type="molecule type" value="Genomic_DNA"/>
</dbReference>
<dbReference type="RefSeq" id="WP_011096417.1">
    <property type="nucleotide sequence ID" value="NC_004551.1"/>
</dbReference>
<dbReference type="SMR" id="Q83HP9"/>
<dbReference type="GeneID" id="67388246"/>
<dbReference type="KEGG" id="tws:TW470"/>
<dbReference type="HOGENOM" id="CLU_024251_2_3_11"/>
<dbReference type="UniPathway" id="UPA00109">
    <property type="reaction ID" value="UER00189"/>
</dbReference>
<dbReference type="UniPathway" id="UPA00138"/>
<dbReference type="GO" id="GO:0005829">
    <property type="term" value="C:cytosol"/>
    <property type="evidence" value="ECO:0007669"/>
    <property type="project" value="TreeGrafter"/>
</dbReference>
<dbReference type="GO" id="GO:0004807">
    <property type="term" value="F:triose-phosphate isomerase activity"/>
    <property type="evidence" value="ECO:0007669"/>
    <property type="project" value="UniProtKB-UniRule"/>
</dbReference>
<dbReference type="GO" id="GO:0006094">
    <property type="term" value="P:gluconeogenesis"/>
    <property type="evidence" value="ECO:0007669"/>
    <property type="project" value="UniProtKB-UniRule"/>
</dbReference>
<dbReference type="GO" id="GO:0046166">
    <property type="term" value="P:glyceraldehyde-3-phosphate biosynthetic process"/>
    <property type="evidence" value="ECO:0007669"/>
    <property type="project" value="TreeGrafter"/>
</dbReference>
<dbReference type="GO" id="GO:0019563">
    <property type="term" value="P:glycerol catabolic process"/>
    <property type="evidence" value="ECO:0007669"/>
    <property type="project" value="TreeGrafter"/>
</dbReference>
<dbReference type="GO" id="GO:0006096">
    <property type="term" value="P:glycolytic process"/>
    <property type="evidence" value="ECO:0007669"/>
    <property type="project" value="UniProtKB-UniRule"/>
</dbReference>
<dbReference type="CDD" id="cd00311">
    <property type="entry name" value="TIM"/>
    <property type="match status" value="1"/>
</dbReference>
<dbReference type="Gene3D" id="3.20.20.70">
    <property type="entry name" value="Aldolase class I"/>
    <property type="match status" value="1"/>
</dbReference>
<dbReference type="HAMAP" id="MF_00147_B">
    <property type="entry name" value="TIM_B"/>
    <property type="match status" value="1"/>
</dbReference>
<dbReference type="InterPro" id="IPR013785">
    <property type="entry name" value="Aldolase_TIM"/>
</dbReference>
<dbReference type="InterPro" id="IPR035990">
    <property type="entry name" value="TIM_sf"/>
</dbReference>
<dbReference type="InterPro" id="IPR022896">
    <property type="entry name" value="TrioseP_Isoase_bac/euk"/>
</dbReference>
<dbReference type="InterPro" id="IPR000652">
    <property type="entry name" value="Triosephosphate_isomerase"/>
</dbReference>
<dbReference type="InterPro" id="IPR020861">
    <property type="entry name" value="Triosephosphate_isomerase_AS"/>
</dbReference>
<dbReference type="PANTHER" id="PTHR21139">
    <property type="entry name" value="TRIOSEPHOSPHATE ISOMERASE"/>
    <property type="match status" value="1"/>
</dbReference>
<dbReference type="PANTHER" id="PTHR21139:SF42">
    <property type="entry name" value="TRIOSEPHOSPHATE ISOMERASE"/>
    <property type="match status" value="1"/>
</dbReference>
<dbReference type="Pfam" id="PF00121">
    <property type="entry name" value="TIM"/>
    <property type="match status" value="1"/>
</dbReference>
<dbReference type="SUPFAM" id="SSF51351">
    <property type="entry name" value="Triosephosphate isomerase (TIM)"/>
    <property type="match status" value="1"/>
</dbReference>
<dbReference type="PROSITE" id="PS00171">
    <property type="entry name" value="TIM_1"/>
    <property type="match status" value="1"/>
</dbReference>
<dbReference type="PROSITE" id="PS51440">
    <property type="entry name" value="TIM_2"/>
    <property type="match status" value="1"/>
</dbReference>
<protein>
    <recommendedName>
        <fullName evidence="1">Triosephosphate isomerase</fullName>
        <shortName evidence="1">TIM</shortName>
        <shortName evidence="1">TPI</shortName>
        <ecNumber evidence="1">5.3.1.1</ecNumber>
    </recommendedName>
    <alternativeName>
        <fullName evidence="1">Triose-phosphate isomerase</fullName>
    </alternativeName>
</protein>
<name>TPIS_TROW8</name>
<reference key="1">
    <citation type="journal article" date="2003" name="Lancet">
        <title>Sequencing and analysis of the genome of the Whipple's disease bacterium Tropheryma whipplei.</title>
        <authorList>
            <person name="Bentley S.D."/>
            <person name="Maiwald M."/>
            <person name="Murphy L.D."/>
            <person name="Pallen M.J."/>
            <person name="Yeats C.A."/>
            <person name="Dover L.G."/>
            <person name="Norbertczak H.T."/>
            <person name="Besra G.S."/>
            <person name="Quail M.A."/>
            <person name="Harris D.E."/>
            <person name="von Herbay A."/>
            <person name="Goble A."/>
            <person name="Rutter S."/>
            <person name="Squares R."/>
            <person name="Squares S."/>
            <person name="Barrell B.G."/>
            <person name="Parkhill J."/>
            <person name="Relman D.A."/>
        </authorList>
    </citation>
    <scope>NUCLEOTIDE SEQUENCE [LARGE SCALE GENOMIC DNA]</scope>
    <source>
        <strain>TW08/27</strain>
    </source>
</reference>
<feature type="chain" id="PRO_0000090309" description="Triosephosphate isomerase">
    <location>
        <begin position="1"/>
        <end position="293"/>
    </location>
</feature>
<feature type="active site" description="Electrophile" evidence="1">
    <location>
        <position position="117"/>
    </location>
</feature>
<feature type="active site" description="Proton acceptor" evidence="1">
    <location>
        <position position="218"/>
    </location>
</feature>
<feature type="binding site" evidence="1">
    <location>
        <begin position="25"/>
        <end position="27"/>
    </location>
    <ligand>
        <name>substrate</name>
    </ligand>
</feature>
<keyword id="KW-0963">Cytoplasm</keyword>
<keyword id="KW-0312">Gluconeogenesis</keyword>
<keyword id="KW-0324">Glycolysis</keyword>
<keyword id="KW-0413">Isomerase</keyword>
<comment type="function">
    <text evidence="1">Involved in the gluconeogenesis. Catalyzes stereospecifically the conversion of dihydroxyacetone phosphate (DHAP) to D-glyceraldehyde-3-phosphate (G3P).</text>
</comment>
<comment type="catalytic activity">
    <reaction evidence="1">
        <text>D-glyceraldehyde 3-phosphate = dihydroxyacetone phosphate</text>
        <dbReference type="Rhea" id="RHEA:18585"/>
        <dbReference type="ChEBI" id="CHEBI:57642"/>
        <dbReference type="ChEBI" id="CHEBI:59776"/>
        <dbReference type="EC" id="5.3.1.1"/>
    </reaction>
</comment>
<comment type="pathway">
    <text evidence="1">Carbohydrate biosynthesis; gluconeogenesis.</text>
</comment>
<comment type="pathway">
    <text evidence="1">Carbohydrate degradation; glycolysis; D-glyceraldehyde 3-phosphate from glycerone phosphate: step 1/1.</text>
</comment>
<comment type="subunit">
    <text evidence="1">Homodimer.</text>
</comment>
<comment type="subcellular location">
    <subcellularLocation>
        <location evidence="1">Cytoplasm</location>
    </subcellularLocation>
</comment>
<comment type="similarity">
    <text evidence="1">Belongs to the triosephosphate isomerase family.</text>
</comment>
<evidence type="ECO:0000255" key="1">
    <source>
        <dbReference type="HAMAP-Rule" id="MF_00147"/>
    </source>
</evidence>